<sequence length="294" mass="32042">MRTDGDSWDIVSSVGLTALGVATFRALETVRPDALIQDDYARWFVEAAGEPHFTGLLADPSLLGDMRFSGFMGSRTRFFDEFFSSATGAGVSQAVILAAGLDARAYRLDWPTGTTVFEVDQPQVLEFKAEVLADHGATAKADRRPVAVDLRDDWPAALEAAGFDPGKPTAWSVEGLLAYLPGAAHDALFERIDELSSPGSHVAVDNFAEGTDMQRFDAIRAKYFAENPFGDIDIAELFYGDERADPVQWLTGHGWSVRRSTSLELAAAYGRPVPDLPEELVDLSERSTYLTAVK</sequence>
<reference key="1">
    <citation type="journal article" date="2006" name="Proc. Natl. Acad. Sci. U.S.A.">
        <title>The complete genome of Rhodococcus sp. RHA1 provides insights into a catabolic powerhouse.</title>
        <authorList>
            <person name="McLeod M.P."/>
            <person name="Warren R.L."/>
            <person name="Hsiao W.W.L."/>
            <person name="Araki N."/>
            <person name="Myhre M."/>
            <person name="Fernandes C."/>
            <person name="Miyazawa D."/>
            <person name="Wong W."/>
            <person name="Lillquist A.L."/>
            <person name="Wang D."/>
            <person name="Dosanjh M."/>
            <person name="Hara H."/>
            <person name="Petrescu A."/>
            <person name="Morin R.D."/>
            <person name="Yang G."/>
            <person name="Stott J.M."/>
            <person name="Schein J.E."/>
            <person name="Shin H."/>
            <person name="Smailus D."/>
            <person name="Siddiqui A.S."/>
            <person name="Marra M.A."/>
            <person name="Jones S.J.M."/>
            <person name="Holt R."/>
            <person name="Brinkman F.S.L."/>
            <person name="Miyauchi K."/>
            <person name="Fukuda M."/>
            <person name="Davies J.E."/>
            <person name="Mohn W.W."/>
            <person name="Eltis L.D."/>
        </authorList>
    </citation>
    <scope>NUCLEOTIDE SEQUENCE [LARGE SCALE GENOMIC DNA]</scope>
    <source>
        <strain>RHA1</strain>
    </source>
</reference>
<comment type="function">
    <text evidence="1">Exhibits S-adenosyl-L-methionine-dependent methyltransferase activity.</text>
</comment>
<comment type="similarity">
    <text evidence="2">Belongs to the UPF0677 family.</text>
</comment>
<comment type="sequence caution" evidence="2">
    <conflict type="erroneous initiation">
        <sequence resource="EMBL-CDS" id="ABG92440"/>
    </conflict>
</comment>
<protein>
    <recommendedName>
        <fullName>Putative S-adenosyl-L-methionine-dependent methyltransferase RHA1_ro00605</fullName>
        <ecNumber>2.1.1.-</ecNumber>
    </recommendedName>
</protein>
<feature type="chain" id="PRO_0000361262" description="Putative S-adenosyl-L-methionine-dependent methyltransferase RHA1_ro00605">
    <location>
        <begin position="1"/>
        <end position="294"/>
    </location>
</feature>
<feature type="binding site" evidence="1">
    <location>
        <position position="120"/>
    </location>
    <ligand>
        <name>S-adenosyl-L-methionine</name>
        <dbReference type="ChEBI" id="CHEBI:59789"/>
    </ligand>
</feature>
<feature type="binding site" evidence="1">
    <location>
        <begin position="149"/>
        <end position="150"/>
    </location>
    <ligand>
        <name>S-adenosyl-L-methionine</name>
        <dbReference type="ChEBI" id="CHEBI:59789"/>
    </ligand>
</feature>
<gene>
    <name type="ordered locus">RHA1_ro00605</name>
</gene>
<accession>Q0SJ46</accession>
<name>Y605_RHOJR</name>
<keyword id="KW-0489">Methyltransferase</keyword>
<keyword id="KW-0949">S-adenosyl-L-methionine</keyword>
<keyword id="KW-0808">Transferase</keyword>
<evidence type="ECO:0000250" key="1"/>
<evidence type="ECO:0000305" key="2"/>
<organism>
    <name type="scientific">Rhodococcus jostii (strain RHA1)</name>
    <dbReference type="NCBI Taxonomy" id="101510"/>
    <lineage>
        <taxon>Bacteria</taxon>
        <taxon>Bacillati</taxon>
        <taxon>Actinomycetota</taxon>
        <taxon>Actinomycetes</taxon>
        <taxon>Mycobacteriales</taxon>
        <taxon>Nocardiaceae</taxon>
        <taxon>Rhodococcus</taxon>
    </lineage>
</organism>
<dbReference type="EC" id="2.1.1.-"/>
<dbReference type="EMBL" id="CP000431">
    <property type="protein sequence ID" value="ABG92440.1"/>
    <property type="status" value="ALT_INIT"/>
    <property type="molecule type" value="Genomic_DNA"/>
</dbReference>
<dbReference type="RefSeq" id="WP_041810991.1">
    <property type="nucleotide sequence ID" value="NC_008268.1"/>
</dbReference>
<dbReference type="SMR" id="Q0SJ46"/>
<dbReference type="KEGG" id="rha:RHA1_ro00605"/>
<dbReference type="PATRIC" id="fig|101510.16.peg.630"/>
<dbReference type="eggNOG" id="COG3315">
    <property type="taxonomic scope" value="Bacteria"/>
</dbReference>
<dbReference type="HOGENOM" id="CLU_056160_2_2_11"/>
<dbReference type="OrthoDB" id="9806164at2"/>
<dbReference type="Proteomes" id="UP000008710">
    <property type="component" value="Chromosome"/>
</dbReference>
<dbReference type="GO" id="GO:0008168">
    <property type="term" value="F:methyltransferase activity"/>
    <property type="evidence" value="ECO:0007669"/>
    <property type="project" value="UniProtKB-KW"/>
</dbReference>
<dbReference type="GO" id="GO:0032259">
    <property type="term" value="P:methylation"/>
    <property type="evidence" value="ECO:0007669"/>
    <property type="project" value="UniProtKB-KW"/>
</dbReference>
<dbReference type="Gene3D" id="3.40.50.150">
    <property type="entry name" value="Vaccinia Virus protein VP39"/>
    <property type="match status" value="1"/>
</dbReference>
<dbReference type="InterPro" id="IPR007213">
    <property type="entry name" value="Ppm1/Ppm2/Tcmp"/>
</dbReference>
<dbReference type="InterPro" id="IPR029063">
    <property type="entry name" value="SAM-dependent_MTases_sf"/>
</dbReference>
<dbReference type="InterPro" id="IPR011610">
    <property type="entry name" value="SAM_mthyl_Trfase_ML2640-like"/>
</dbReference>
<dbReference type="NCBIfam" id="TIGR00027">
    <property type="entry name" value="mthyl_TIGR00027"/>
    <property type="match status" value="1"/>
</dbReference>
<dbReference type="PANTHER" id="PTHR43619">
    <property type="entry name" value="S-ADENOSYL-L-METHIONINE-DEPENDENT METHYLTRANSFERASE YKTD-RELATED"/>
    <property type="match status" value="1"/>
</dbReference>
<dbReference type="PANTHER" id="PTHR43619:SF2">
    <property type="entry name" value="S-ADENOSYL-L-METHIONINE-DEPENDENT METHYLTRANSFERASES SUPERFAMILY PROTEIN"/>
    <property type="match status" value="1"/>
</dbReference>
<dbReference type="Pfam" id="PF04072">
    <property type="entry name" value="LCM"/>
    <property type="match status" value="1"/>
</dbReference>
<dbReference type="SUPFAM" id="SSF53335">
    <property type="entry name" value="S-adenosyl-L-methionine-dependent methyltransferases"/>
    <property type="match status" value="1"/>
</dbReference>
<proteinExistence type="inferred from homology"/>